<feature type="chain" id="PRO_0000451141" description="Cyanide hydratase">
    <location>
        <begin position="1"/>
        <end position="371"/>
    </location>
</feature>
<feature type="domain" description="CN hydrolase" evidence="1">
    <location>
        <begin position="6"/>
        <end position="285"/>
    </location>
</feature>
<feature type="region of interest" description="Disordered" evidence="3">
    <location>
        <begin position="339"/>
        <end position="371"/>
    </location>
</feature>
<feature type="compositionally biased region" description="Basic and acidic residues" evidence="3">
    <location>
        <begin position="339"/>
        <end position="353"/>
    </location>
</feature>
<feature type="active site" description="Proton acceptor" evidence="2">
    <location>
        <position position="46"/>
    </location>
</feature>
<feature type="active site" evidence="2">
    <location>
        <position position="128"/>
    </location>
</feature>
<feature type="active site" description="Nucleophile" evidence="2">
    <location>
        <position position="163"/>
    </location>
</feature>
<protein>
    <recommendedName>
        <fullName evidence="1">Cyanide hydratase</fullName>
        <shortName evidence="1">CHT</shortName>
        <ecNumber evidence="1">4.2.1.66</ecNumber>
    </recommendedName>
    <alternativeName>
        <fullName evidence="1">Cyanide-degrading nitrilase</fullName>
    </alternativeName>
    <alternativeName>
        <fullName evidence="1">Formamide hydrolyase</fullName>
    </alternativeName>
    <alternativeName>
        <fullName evidence="5">NitSh</fullName>
    </alternativeName>
</protein>
<name>CHT_STEHR</name>
<comment type="function">
    <text evidence="1 4">Catalyzes the hydration of cyanide to formamide. Degradation of cyanide may be important for plant pathogenic fungi in infection of cyanogenic plants (By similarity) (PubMed:31795104). Also acts on 2-cyanopyridine, fumaronitrile and benzonitrile, albeit at a lower rate (PubMed:31795104).</text>
</comment>
<comment type="catalytic activity">
    <reaction evidence="1">
        <text>formamide = hydrogen cyanide + H2O</text>
        <dbReference type="Rhea" id="RHEA:21720"/>
        <dbReference type="ChEBI" id="CHEBI:15377"/>
        <dbReference type="ChEBI" id="CHEBI:16397"/>
        <dbReference type="ChEBI" id="CHEBI:18407"/>
        <dbReference type="EC" id="4.2.1.66"/>
    </reaction>
</comment>
<comment type="subunit">
    <text evidence="1">Oligomer of dimers, forming left-handed helical fibers.</text>
</comment>
<comment type="induction">
    <text evidence="1">By cyanide.</text>
</comment>
<comment type="similarity">
    <text evidence="1">Belongs to the carbon-nitrogen hydrolase superfamily. Nitrilase family.</text>
</comment>
<sequence>MPITQYKAAAVTSEPCWFDLEAGVQKTISFINEAGQAGSKLIAFPEVWIPGYPYWMWKVTYQQSLPLLKSYRENSLPVDSEEMRRIRRAARDNHIYVSMGFSEIDHATLYLSQVLISPTGDVLNHRRKIKPTHVEKLVYGDGDGDTFLSVVDTDLGRLGQLNCWENMNPFLKSLNIAMGEQIHIAAWPVYPGKETLKYPDPATNVAEPASDIVTPAYALETATWTLAPFQRLSVEGLKKNTPAGMEPETDPSTYNGHARIYRPDGSLVVKPDKDFDGLLYVDIDLNESHLTKALGDFASGHYMRPDLIRLLVDTRRKELVTEADPDGGVATYSTRERLGLNRPLDPPKDERHGIVGVAGQKSAEQRKAGDL</sequence>
<evidence type="ECO:0000255" key="1">
    <source>
        <dbReference type="HAMAP-Rule" id="MF_03224"/>
    </source>
</evidence>
<evidence type="ECO:0000255" key="2">
    <source>
        <dbReference type="PROSITE-ProRule" id="PRU00054"/>
    </source>
</evidence>
<evidence type="ECO:0000256" key="3">
    <source>
        <dbReference type="SAM" id="MobiDB-lite"/>
    </source>
</evidence>
<evidence type="ECO:0000269" key="4">
    <source>
    </source>
</evidence>
<evidence type="ECO:0000303" key="5">
    <source>
    </source>
</evidence>
<reference key="1">
    <citation type="journal article" date="2012" name="Science">
        <title>The Paleozoic origin of enzymatic lignin decomposition reconstructed from 31 fungal genomes.</title>
        <authorList>
            <person name="Floudas D."/>
            <person name="Binder M."/>
            <person name="Riley R."/>
            <person name="Barry K."/>
            <person name="Blanchette R.A."/>
            <person name="Henrissat B."/>
            <person name="Martinez A.T."/>
            <person name="Otillar R."/>
            <person name="Spatafora J.W."/>
            <person name="Yadav J.S."/>
            <person name="Aerts A."/>
            <person name="Benoit I."/>
            <person name="Boyd A."/>
            <person name="Carlson A."/>
            <person name="Copeland A."/>
            <person name="Coutinho P.M."/>
            <person name="de Vries R.P."/>
            <person name="Ferreira P."/>
            <person name="Findley K."/>
            <person name="Foster B."/>
            <person name="Gaskell J."/>
            <person name="Glotzer D."/>
            <person name="Gorecki P."/>
            <person name="Heitman J."/>
            <person name="Hesse C."/>
            <person name="Hori C."/>
            <person name="Igarashi K."/>
            <person name="Jurgens J.A."/>
            <person name="Kallen N."/>
            <person name="Kersten P."/>
            <person name="Kohler A."/>
            <person name="Kuees U."/>
            <person name="Kumar T.K.A."/>
            <person name="Kuo A."/>
            <person name="LaButti K."/>
            <person name="Larrondo L.F."/>
            <person name="Lindquist E."/>
            <person name="Ling A."/>
            <person name="Lombard V."/>
            <person name="Lucas S."/>
            <person name="Lundell T."/>
            <person name="Martin R."/>
            <person name="McLaughlin D.J."/>
            <person name="Morgenstern I."/>
            <person name="Morin E."/>
            <person name="Murat C."/>
            <person name="Nagy L.G."/>
            <person name="Nolan M."/>
            <person name="Ohm R.A."/>
            <person name="Patyshakuliyeva A."/>
            <person name="Rokas A."/>
            <person name="Ruiz-Duenas F.J."/>
            <person name="Sabat G."/>
            <person name="Salamov A."/>
            <person name="Samejima M."/>
            <person name="Schmutz J."/>
            <person name="Slot J.C."/>
            <person name="St John F."/>
            <person name="Stenlid J."/>
            <person name="Sun H."/>
            <person name="Sun S."/>
            <person name="Syed K."/>
            <person name="Tsang A."/>
            <person name="Wiebenga A."/>
            <person name="Young D."/>
            <person name="Pisabarro A."/>
            <person name="Eastwood D.C."/>
            <person name="Martin F."/>
            <person name="Cullen D."/>
            <person name="Grigoriev I.V."/>
            <person name="Hibbett D.S."/>
        </authorList>
    </citation>
    <scope>NUCLEOTIDE SEQUENCE [LARGE SCALE GENOMIC DNA]</scope>
    <source>
        <strain>FP-91666</strain>
    </source>
</reference>
<reference key="2">
    <citation type="journal article" date="2019" name="Int. J. Mol. Sci.">
        <title>Genetic and functional diversity of nitrilases in Agaricomycotina.</title>
        <authorList>
            <person name="Rucka L."/>
            <person name="Chmatal M."/>
            <person name="Kulik N."/>
            <person name="Petraskova L."/>
            <person name="Pelantova H."/>
            <person name="Novotny P."/>
            <person name="Prihodova R."/>
            <person name="Patek M."/>
            <person name="Martinkova L."/>
        </authorList>
    </citation>
    <scope>FUNCTION</scope>
    <scope>CATALYTIC ACTIVITY</scope>
</reference>
<gene>
    <name type="primary">nit</name>
    <name type="ORF">STEHIDRAFT_170918</name>
</gene>
<accession>P9WEU5</accession>
<proteinExistence type="evidence at protein level"/>
<organism>
    <name type="scientific">Stereum hirsutum (strain FP-91666)</name>
    <name type="common">White-rot fungus</name>
    <dbReference type="NCBI Taxonomy" id="721885"/>
    <lineage>
        <taxon>Eukaryota</taxon>
        <taxon>Fungi</taxon>
        <taxon>Dikarya</taxon>
        <taxon>Basidiomycota</taxon>
        <taxon>Agaricomycotina</taxon>
        <taxon>Agaricomycetes</taxon>
        <taxon>Russulales</taxon>
        <taxon>Stereaceae</taxon>
        <taxon>Stereum</taxon>
    </lineage>
</organism>
<keyword id="KW-0378">Hydrolase</keyword>
<keyword id="KW-0456">Lyase</keyword>
<keyword id="KW-1185">Reference proteome</keyword>
<dbReference type="EC" id="4.2.1.66" evidence="1"/>
<dbReference type="EMBL" id="JH687392">
    <property type="protein sequence ID" value="EIM82695.1"/>
    <property type="molecule type" value="Genomic_DNA"/>
</dbReference>
<dbReference type="RefSeq" id="XP_007307917.1">
    <property type="nucleotide sequence ID" value="XM_007307855.1"/>
</dbReference>
<dbReference type="SMR" id="P9WEU5"/>
<dbReference type="GeneID" id="18803779"/>
<dbReference type="KEGG" id="shs:STEHIDRAFT_170918"/>
<dbReference type="OMA" id="TSEPCWF"/>
<dbReference type="OrthoDB" id="10250282at2759"/>
<dbReference type="Proteomes" id="UP000053927">
    <property type="component" value="Unassembled WGS sequence"/>
</dbReference>
<dbReference type="GO" id="GO:0030196">
    <property type="term" value="F:cyanide hydratase activity"/>
    <property type="evidence" value="ECO:0007669"/>
    <property type="project" value="UniProtKB-UniRule"/>
</dbReference>
<dbReference type="GO" id="GO:0000257">
    <property type="term" value="F:nitrilase activity"/>
    <property type="evidence" value="ECO:0007669"/>
    <property type="project" value="UniProtKB-ARBA"/>
</dbReference>
<dbReference type="GO" id="GO:0019500">
    <property type="term" value="P:cyanide catabolic process"/>
    <property type="evidence" value="ECO:0007669"/>
    <property type="project" value="UniProtKB-UniRule"/>
</dbReference>
<dbReference type="CDD" id="cd07564">
    <property type="entry name" value="nitrilases_CHs"/>
    <property type="match status" value="1"/>
</dbReference>
<dbReference type="FunFam" id="3.60.110.10:FF:000011">
    <property type="entry name" value="Cyanide hydratase"/>
    <property type="match status" value="1"/>
</dbReference>
<dbReference type="Gene3D" id="3.60.110.10">
    <property type="entry name" value="Carbon-nitrogen hydrolase"/>
    <property type="match status" value="1"/>
</dbReference>
<dbReference type="HAMAP" id="MF_03224">
    <property type="entry name" value="CN_hydrolase"/>
    <property type="match status" value="1"/>
</dbReference>
<dbReference type="InterPro" id="IPR003010">
    <property type="entry name" value="C-N_Hydrolase"/>
</dbReference>
<dbReference type="InterPro" id="IPR036526">
    <property type="entry name" value="C-N_Hydrolase_sf"/>
</dbReference>
<dbReference type="InterPro" id="IPR037544">
    <property type="entry name" value="CN_hydrolase"/>
</dbReference>
<dbReference type="InterPro" id="IPR000132">
    <property type="entry name" value="Nitrilase/CN_hydratase_CS"/>
</dbReference>
<dbReference type="InterPro" id="IPR044149">
    <property type="entry name" value="Nitrilases_CHs"/>
</dbReference>
<dbReference type="PANTHER" id="PTHR46044:SF4">
    <property type="entry name" value="CYANIDE HYDRATASE"/>
    <property type="match status" value="1"/>
</dbReference>
<dbReference type="PANTHER" id="PTHR46044">
    <property type="entry name" value="NITRILASE"/>
    <property type="match status" value="1"/>
</dbReference>
<dbReference type="Pfam" id="PF00795">
    <property type="entry name" value="CN_hydrolase"/>
    <property type="match status" value="1"/>
</dbReference>
<dbReference type="SUPFAM" id="SSF56317">
    <property type="entry name" value="Carbon-nitrogen hydrolase"/>
    <property type="match status" value="1"/>
</dbReference>
<dbReference type="PROSITE" id="PS50263">
    <property type="entry name" value="CN_HYDROLASE"/>
    <property type="match status" value="1"/>
</dbReference>
<dbReference type="PROSITE" id="PS00920">
    <property type="entry name" value="NITRIL_CHT_1"/>
    <property type="match status" value="1"/>
</dbReference>
<dbReference type="PROSITE" id="PS00921">
    <property type="entry name" value="NITRIL_CHT_2"/>
    <property type="match status" value="1"/>
</dbReference>